<feature type="chain" id="PRO_0000196371" description="R46 site-specific recombinase">
    <location>
        <begin position="1"/>
        <end position="190"/>
    </location>
</feature>
<feature type="domain" description="Resolvase/invertase-type recombinase catalytic" evidence="2">
    <location>
        <begin position="2"/>
        <end position="137"/>
    </location>
</feature>
<feature type="DNA-binding region" description="H-T-H motif" evidence="1">
    <location>
        <begin position="161"/>
        <end position="180"/>
    </location>
</feature>
<feature type="active site" description="O-(5'-phospho-DNA)-serine intermediate" evidence="2">
    <location>
        <position position="10"/>
    </location>
</feature>
<sequence length="190" mass="21152">MRLFGYARVSTSQQSLDIQIKGLKEAGVKASRIFTDKASGSSTDRKGLDLLRMKVEEGDVTLVKKLDRLGRDTADMIQLTKEFDAQGVAVRFIDDGISTDGEMGKMVVTILSAVAQAERRRILERTNEGRQEAKLKGIRFGRKRIIDRNSVLALHQQGTGATDIARRLSIARSTVYKILEDESRVNLSKI</sequence>
<geneLocation type="plasmid">
    <name>IncN R46</name>
</geneLocation>
<organism>
    <name type="scientific">Escherichia coli</name>
    <dbReference type="NCBI Taxonomy" id="562"/>
    <lineage>
        <taxon>Bacteria</taxon>
        <taxon>Pseudomonadati</taxon>
        <taxon>Pseudomonadota</taxon>
        <taxon>Gammaproteobacteria</taxon>
        <taxon>Enterobacterales</taxon>
        <taxon>Enterobacteriaceae</taxon>
        <taxon>Escherichia</taxon>
    </lineage>
</organism>
<name>RES4_ECOLX</name>
<keyword id="KW-0229">DNA integration</keyword>
<keyword id="KW-0233">DNA recombination</keyword>
<keyword id="KW-0238">DNA-binding</keyword>
<keyword id="KW-0614">Plasmid</keyword>
<proteinExistence type="inferred from homology"/>
<protein>
    <recommendedName>
        <fullName>R46 site-specific recombinase</fullName>
    </recommendedName>
</protein>
<comment type="function">
    <text>Site-specific recombination protein.</text>
</comment>
<comment type="similarity">
    <text evidence="3">Belongs to the site-specific recombinase resolvase family.</text>
</comment>
<gene>
    <name type="primary">tnpR</name>
    <name type="synonym">perR46</name>
</gene>
<accession>P13606</accession>
<reference key="1">
    <citation type="journal article" date="1987" name="J. Gen. Microbiol.">
        <title>The R46 site-specific recombination system is a homologue of the Tn3 and gamma delta (Tn1000) cointegrate resolution system.</title>
        <authorList>
            <person name="Dodd H.M."/>
            <person name="Bennett P.M."/>
        </authorList>
    </citation>
    <scope>NUCLEOTIDE SEQUENCE [GENOMIC DNA]</scope>
</reference>
<dbReference type="EMBL" id="M17311">
    <property type="protein sequence ID" value="AAA26080.1"/>
    <property type="molecule type" value="Genomic_DNA"/>
</dbReference>
<dbReference type="SMR" id="P13606"/>
<dbReference type="GO" id="GO:0003677">
    <property type="term" value="F:DNA binding"/>
    <property type="evidence" value="ECO:0007669"/>
    <property type="project" value="UniProtKB-KW"/>
</dbReference>
<dbReference type="GO" id="GO:0000150">
    <property type="term" value="F:DNA strand exchange activity"/>
    <property type="evidence" value="ECO:0007669"/>
    <property type="project" value="InterPro"/>
</dbReference>
<dbReference type="GO" id="GO:0015074">
    <property type="term" value="P:DNA integration"/>
    <property type="evidence" value="ECO:0007669"/>
    <property type="project" value="UniProtKB-KW"/>
</dbReference>
<dbReference type="CDD" id="cd03768">
    <property type="entry name" value="SR_ResInv"/>
    <property type="match status" value="1"/>
</dbReference>
<dbReference type="Gene3D" id="6.10.250.10">
    <property type="match status" value="1"/>
</dbReference>
<dbReference type="Gene3D" id="1.10.10.60">
    <property type="entry name" value="Homeodomain-like"/>
    <property type="match status" value="1"/>
</dbReference>
<dbReference type="Gene3D" id="3.40.50.1390">
    <property type="entry name" value="Resolvase, N-terminal catalytic domain"/>
    <property type="match status" value="1"/>
</dbReference>
<dbReference type="InterPro" id="IPR009057">
    <property type="entry name" value="Homeodomain-like_sf"/>
</dbReference>
<dbReference type="InterPro" id="IPR006118">
    <property type="entry name" value="Recombinase_CS"/>
</dbReference>
<dbReference type="InterPro" id="IPR006119">
    <property type="entry name" value="Resolv_N"/>
</dbReference>
<dbReference type="InterPro" id="IPR036162">
    <property type="entry name" value="Resolvase-like_N_sf"/>
</dbReference>
<dbReference type="InterPro" id="IPR006120">
    <property type="entry name" value="Resolvase_HTH_dom"/>
</dbReference>
<dbReference type="InterPro" id="IPR050639">
    <property type="entry name" value="SSR_resolvase"/>
</dbReference>
<dbReference type="PANTHER" id="PTHR30461">
    <property type="entry name" value="DNA-INVERTASE FROM LAMBDOID PROPHAGE"/>
    <property type="match status" value="1"/>
</dbReference>
<dbReference type="PANTHER" id="PTHR30461:SF26">
    <property type="entry name" value="RESOLVASE HOMOLOG YNEB"/>
    <property type="match status" value="1"/>
</dbReference>
<dbReference type="Pfam" id="PF02796">
    <property type="entry name" value="HTH_7"/>
    <property type="match status" value="1"/>
</dbReference>
<dbReference type="Pfam" id="PF00239">
    <property type="entry name" value="Resolvase"/>
    <property type="match status" value="1"/>
</dbReference>
<dbReference type="SMART" id="SM00857">
    <property type="entry name" value="Resolvase"/>
    <property type="match status" value="1"/>
</dbReference>
<dbReference type="SUPFAM" id="SSF46689">
    <property type="entry name" value="Homeodomain-like"/>
    <property type="match status" value="1"/>
</dbReference>
<dbReference type="SUPFAM" id="SSF53041">
    <property type="entry name" value="Resolvase-like"/>
    <property type="match status" value="1"/>
</dbReference>
<dbReference type="PROSITE" id="PS00397">
    <property type="entry name" value="RECOMBINASES_1"/>
    <property type="match status" value="1"/>
</dbReference>
<dbReference type="PROSITE" id="PS00398">
    <property type="entry name" value="RECOMBINASES_2"/>
    <property type="match status" value="1"/>
</dbReference>
<dbReference type="PROSITE" id="PS51736">
    <property type="entry name" value="RECOMBINASES_3"/>
    <property type="match status" value="1"/>
</dbReference>
<evidence type="ECO:0000255" key="1"/>
<evidence type="ECO:0000255" key="2">
    <source>
        <dbReference type="PROSITE-ProRule" id="PRU01072"/>
    </source>
</evidence>
<evidence type="ECO:0000305" key="3"/>